<organism>
    <name type="scientific">Archaeoglobus fulgidus (strain ATCC 49558 / DSM 4304 / JCM 9628 / NBRC 100126 / VC-16)</name>
    <dbReference type="NCBI Taxonomy" id="224325"/>
    <lineage>
        <taxon>Archaea</taxon>
        <taxon>Methanobacteriati</taxon>
        <taxon>Methanobacteriota</taxon>
        <taxon>Archaeoglobi</taxon>
        <taxon>Archaeoglobales</taxon>
        <taxon>Archaeoglobaceae</taxon>
        <taxon>Archaeoglobus</taxon>
    </lineage>
</organism>
<gene>
    <name evidence="1" type="primary">rpl23</name>
    <name type="ordered locus">AF_1923</name>
</gene>
<name>RL23_ARCFU</name>
<evidence type="ECO:0000255" key="1">
    <source>
        <dbReference type="HAMAP-Rule" id="MF_01369"/>
    </source>
</evidence>
<evidence type="ECO:0000305" key="2"/>
<feature type="chain" id="PRO_0000129434" description="Large ribosomal subunit protein uL23">
    <location>
        <begin position="1"/>
        <end position="83"/>
    </location>
</feature>
<comment type="function">
    <text evidence="1">Binds to 23S rRNA. One of the proteins that surrounds the polypeptide exit tunnel on the outside of the ribosome.</text>
</comment>
<comment type="subunit">
    <text evidence="1">Part of the 50S ribosomal subunit. Contacts protein L29.</text>
</comment>
<comment type="similarity">
    <text evidence="1">Belongs to the universal ribosomal protein uL23 family.</text>
</comment>
<reference key="1">
    <citation type="journal article" date="1997" name="Nature">
        <title>The complete genome sequence of the hyperthermophilic, sulphate-reducing archaeon Archaeoglobus fulgidus.</title>
        <authorList>
            <person name="Klenk H.-P."/>
            <person name="Clayton R.A."/>
            <person name="Tomb J.-F."/>
            <person name="White O."/>
            <person name="Nelson K.E."/>
            <person name="Ketchum K.A."/>
            <person name="Dodson R.J."/>
            <person name="Gwinn M.L."/>
            <person name="Hickey E.K."/>
            <person name="Peterson J.D."/>
            <person name="Richardson D.L."/>
            <person name="Kerlavage A.R."/>
            <person name="Graham D.E."/>
            <person name="Kyrpides N.C."/>
            <person name="Fleischmann R.D."/>
            <person name="Quackenbush J."/>
            <person name="Lee N.H."/>
            <person name="Sutton G.G."/>
            <person name="Gill S.R."/>
            <person name="Kirkness E.F."/>
            <person name="Dougherty B.A."/>
            <person name="McKenney K."/>
            <person name="Adams M.D."/>
            <person name="Loftus B.J."/>
            <person name="Peterson S.N."/>
            <person name="Reich C.I."/>
            <person name="McNeil L.K."/>
            <person name="Badger J.H."/>
            <person name="Glodek A."/>
            <person name="Zhou L."/>
            <person name="Overbeek R."/>
            <person name="Gocayne J.D."/>
            <person name="Weidman J.F."/>
            <person name="McDonald L.A."/>
            <person name="Utterback T.R."/>
            <person name="Cotton M.D."/>
            <person name="Spriggs T."/>
            <person name="Artiach P."/>
            <person name="Kaine B.P."/>
            <person name="Sykes S.M."/>
            <person name="Sadow P.W."/>
            <person name="D'Andrea K.P."/>
            <person name="Bowman C."/>
            <person name="Fujii C."/>
            <person name="Garland S.A."/>
            <person name="Mason T.M."/>
            <person name="Olsen G.J."/>
            <person name="Fraser C.M."/>
            <person name="Smith H.O."/>
            <person name="Woese C.R."/>
            <person name="Venter J.C."/>
        </authorList>
    </citation>
    <scope>NUCLEOTIDE SEQUENCE [LARGE SCALE GENOMIC DNA]</scope>
    <source>
        <strain>ATCC 49558 / DSM 4304 / JCM 9628 / NBRC 100126 / VC-16</strain>
    </source>
</reference>
<dbReference type="EMBL" id="AE000782">
    <property type="protein sequence ID" value="AAB89333.1"/>
    <property type="molecule type" value="Genomic_DNA"/>
</dbReference>
<dbReference type="PIR" id="B69490">
    <property type="entry name" value="B69490"/>
</dbReference>
<dbReference type="SMR" id="O28356"/>
<dbReference type="STRING" id="224325.AF_1923"/>
<dbReference type="PaxDb" id="224325-AF_1923"/>
<dbReference type="EnsemblBacteria" id="AAB89333">
    <property type="protein sequence ID" value="AAB89333"/>
    <property type="gene ID" value="AF_1923"/>
</dbReference>
<dbReference type="KEGG" id="afu:AF_1923"/>
<dbReference type="eggNOG" id="arCOG04072">
    <property type="taxonomic scope" value="Archaea"/>
</dbReference>
<dbReference type="HOGENOM" id="CLU_037562_4_2_2"/>
<dbReference type="PhylomeDB" id="O28356"/>
<dbReference type="Proteomes" id="UP000002199">
    <property type="component" value="Chromosome"/>
</dbReference>
<dbReference type="GO" id="GO:1990904">
    <property type="term" value="C:ribonucleoprotein complex"/>
    <property type="evidence" value="ECO:0007669"/>
    <property type="project" value="UniProtKB-KW"/>
</dbReference>
<dbReference type="GO" id="GO:0005840">
    <property type="term" value="C:ribosome"/>
    <property type="evidence" value="ECO:0007669"/>
    <property type="project" value="UniProtKB-KW"/>
</dbReference>
<dbReference type="GO" id="GO:0019843">
    <property type="term" value="F:rRNA binding"/>
    <property type="evidence" value="ECO:0007669"/>
    <property type="project" value="UniProtKB-UniRule"/>
</dbReference>
<dbReference type="GO" id="GO:0003735">
    <property type="term" value="F:structural constituent of ribosome"/>
    <property type="evidence" value="ECO:0007669"/>
    <property type="project" value="InterPro"/>
</dbReference>
<dbReference type="GO" id="GO:0006412">
    <property type="term" value="P:translation"/>
    <property type="evidence" value="ECO:0007669"/>
    <property type="project" value="UniProtKB-UniRule"/>
</dbReference>
<dbReference type="FunFam" id="3.30.70.330:FF:000532">
    <property type="entry name" value="50S ribosomal protein L23"/>
    <property type="match status" value="1"/>
</dbReference>
<dbReference type="Gene3D" id="3.30.70.330">
    <property type="match status" value="1"/>
</dbReference>
<dbReference type="HAMAP" id="MF_01369_A">
    <property type="entry name" value="Ribosomal_uL23_A"/>
    <property type="match status" value="1"/>
</dbReference>
<dbReference type="InterPro" id="IPR012677">
    <property type="entry name" value="Nucleotide-bd_a/b_plait_sf"/>
</dbReference>
<dbReference type="InterPro" id="IPR019985">
    <property type="entry name" value="Ribosomal_uL23"/>
</dbReference>
<dbReference type="InterPro" id="IPR013025">
    <property type="entry name" value="Ribosomal_uL23-like"/>
</dbReference>
<dbReference type="InterPro" id="IPR012678">
    <property type="entry name" value="Ribosomal_uL23/eL15/eS24_sf"/>
</dbReference>
<dbReference type="InterPro" id="IPR001014">
    <property type="entry name" value="Ribosomal_uL23_CS"/>
</dbReference>
<dbReference type="NCBIfam" id="NF011118">
    <property type="entry name" value="PRK14548.1"/>
    <property type="match status" value="1"/>
</dbReference>
<dbReference type="NCBIfam" id="TIGR03636">
    <property type="entry name" value="uL23_arch"/>
    <property type="match status" value="1"/>
</dbReference>
<dbReference type="PANTHER" id="PTHR11620">
    <property type="entry name" value="60S RIBOSOMAL PROTEIN L23A"/>
    <property type="match status" value="1"/>
</dbReference>
<dbReference type="Pfam" id="PF00276">
    <property type="entry name" value="Ribosomal_L23"/>
    <property type="match status" value="1"/>
</dbReference>
<dbReference type="SUPFAM" id="SSF54189">
    <property type="entry name" value="Ribosomal proteins S24e, L23 and L15e"/>
    <property type="match status" value="1"/>
</dbReference>
<dbReference type="PROSITE" id="PS00050">
    <property type="entry name" value="RIBOSOMAL_L23"/>
    <property type="match status" value="1"/>
</dbReference>
<accession>O28356</accession>
<proteinExistence type="inferred from homology"/>
<protein>
    <recommendedName>
        <fullName evidence="1">Large ribosomal subunit protein uL23</fullName>
    </recommendedName>
    <alternativeName>
        <fullName evidence="2">50S ribosomal protein L23</fullName>
    </alternativeName>
</protein>
<sequence length="83" mass="9579">MVMLIKCFLVTEKSVAELEKNVLTAIVDMRARKEHIKKEIEKLFNVEVERVNTLITPKGEKKAYIKLKPDYSAEEILSKLGVF</sequence>
<keyword id="KW-1185">Reference proteome</keyword>
<keyword id="KW-0687">Ribonucleoprotein</keyword>
<keyword id="KW-0689">Ribosomal protein</keyword>
<keyword id="KW-0694">RNA-binding</keyword>
<keyword id="KW-0699">rRNA-binding</keyword>